<comment type="function">
    <text evidence="1">Cell wall formation.</text>
</comment>
<comment type="catalytic activity">
    <reaction evidence="1">
        <text>UDP-N-acetyl-alpha-D-muramate + L-alanine + ATP = UDP-N-acetyl-alpha-D-muramoyl-L-alanine + ADP + phosphate + H(+)</text>
        <dbReference type="Rhea" id="RHEA:23372"/>
        <dbReference type="ChEBI" id="CHEBI:15378"/>
        <dbReference type="ChEBI" id="CHEBI:30616"/>
        <dbReference type="ChEBI" id="CHEBI:43474"/>
        <dbReference type="ChEBI" id="CHEBI:57972"/>
        <dbReference type="ChEBI" id="CHEBI:70757"/>
        <dbReference type="ChEBI" id="CHEBI:83898"/>
        <dbReference type="ChEBI" id="CHEBI:456216"/>
        <dbReference type="EC" id="6.3.2.8"/>
    </reaction>
</comment>
<comment type="pathway">
    <text evidence="1">Cell wall biogenesis; peptidoglycan biosynthesis.</text>
</comment>
<comment type="subcellular location">
    <subcellularLocation>
        <location evidence="1">Cytoplasm</location>
    </subcellularLocation>
</comment>
<comment type="similarity">
    <text evidence="1">Belongs to the MurCDEF family.</text>
</comment>
<feature type="chain" id="PRO_0000336848" description="UDP-N-acetylmuramate--L-alanine ligase">
    <location>
        <begin position="1"/>
        <end position="469"/>
    </location>
</feature>
<feature type="binding site" evidence="1">
    <location>
        <begin position="113"/>
        <end position="119"/>
    </location>
    <ligand>
        <name>ATP</name>
        <dbReference type="ChEBI" id="CHEBI:30616"/>
    </ligand>
</feature>
<organism>
    <name type="scientific">Neisseria meningitidis serogroup C / serotype 2a (strain ATCC 700532 / DSM 15464 / FAM18)</name>
    <dbReference type="NCBI Taxonomy" id="272831"/>
    <lineage>
        <taxon>Bacteria</taxon>
        <taxon>Pseudomonadati</taxon>
        <taxon>Pseudomonadota</taxon>
        <taxon>Betaproteobacteria</taxon>
        <taxon>Neisseriales</taxon>
        <taxon>Neisseriaceae</taxon>
        <taxon>Neisseria</taxon>
    </lineage>
</organism>
<gene>
    <name evidence="1" type="primary">murC</name>
    <name type="ordered locus">NMC1741</name>
</gene>
<reference key="1">
    <citation type="journal article" date="2007" name="PLoS Genet.">
        <title>Meningococcal genetic variation mechanisms viewed through comparative analysis of serogroup C strain FAM18.</title>
        <authorList>
            <person name="Bentley S.D."/>
            <person name="Vernikos G.S."/>
            <person name="Snyder L.A.S."/>
            <person name="Churcher C."/>
            <person name="Arrowsmith C."/>
            <person name="Chillingworth T."/>
            <person name="Cronin A."/>
            <person name="Davis P.H."/>
            <person name="Holroyd N.E."/>
            <person name="Jagels K."/>
            <person name="Maddison M."/>
            <person name="Moule S."/>
            <person name="Rabbinowitsch E."/>
            <person name="Sharp S."/>
            <person name="Unwin L."/>
            <person name="Whitehead S."/>
            <person name="Quail M.A."/>
            <person name="Achtman M."/>
            <person name="Barrell B.G."/>
            <person name="Saunders N.J."/>
            <person name="Parkhill J."/>
        </authorList>
    </citation>
    <scope>NUCLEOTIDE SEQUENCE [LARGE SCALE GENOMIC DNA]</scope>
    <source>
        <strain>ATCC 700532 / DSM 15464 / FAM18</strain>
    </source>
</reference>
<protein>
    <recommendedName>
        <fullName evidence="1">UDP-N-acetylmuramate--L-alanine ligase</fullName>
        <ecNumber evidence="1">6.3.2.8</ecNumber>
    </recommendedName>
    <alternativeName>
        <fullName evidence="1">UDP-N-acetylmuramoyl-L-alanine synthetase</fullName>
    </alternativeName>
</protein>
<dbReference type="EC" id="6.3.2.8" evidence="1"/>
<dbReference type="EMBL" id="AM421808">
    <property type="protein sequence ID" value="CAM10916.1"/>
    <property type="molecule type" value="Genomic_DNA"/>
</dbReference>
<dbReference type="RefSeq" id="WP_002222038.1">
    <property type="nucleotide sequence ID" value="NC_008767.1"/>
</dbReference>
<dbReference type="SMR" id="A1KVL2"/>
<dbReference type="KEGG" id="nmc:NMC1741"/>
<dbReference type="HOGENOM" id="CLU_028104_2_2_4"/>
<dbReference type="UniPathway" id="UPA00219"/>
<dbReference type="Proteomes" id="UP000002286">
    <property type="component" value="Chromosome"/>
</dbReference>
<dbReference type="GO" id="GO:0005737">
    <property type="term" value="C:cytoplasm"/>
    <property type="evidence" value="ECO:0007669"/>
    <property type="project" value="UniProtKB-SubCell"/>
</dbReference>
<dbReference type="GO" id="GO:0005524">
    <property type="term" value="F:ATP binding"/>
    <property type="evidence" value="ECO:0007669"/>
    <property type="project" value="UniProtKB-UniRule"/>
</dbReference>
<dbReference type="GO" id="GO:0008763">
    <property type="term" value="F:UDP-N-acetylmuramate-L-alanine ligase activity"/>
    <property type="evidence" value="ECO:0007669"/>
    <property type="project" value="UniProtKB-UniRule"/>
</dbReference>
<dbReference type="GO" id="GO:0051301">
    <property type="term" value="P:cell division"/>
    <property type="evidence" value="ECO:0007669"/>
    <property type="project" value="UniProtKB-KW"/>
</dbReference>
<dbReference type="GO" id="GO:0071555">
    <property type="term" value="P:cell wall organization"/>
    <property type="evidence" value="ECO:0007669"/>
    <property type="project" value="UniProtKB-KW"/>
</dbReference>
<dbReference type="GO" id="GO:0009252">
    <property type="term" value="P:peptidoglycan biosynthetic process"/>
    <property type="evidence" value="ECO:0007669"/>
    <property type="project" value="UniProtKB-UniRule"/>
</dbReference>
<dbReference type="GO" id="GO:0008360">
    <property type="term" value="P:regulation of cell shape"/>
    <property type="evidence" value="ECO:0007669"/>
    <property type="project" value="UniProtKB-KW"/>
</dbReference>
<dbReference type="FunFam" id="3.40.1190.10:FF:000001">
    <property type="entry name" value="UDP-N-acetylmuramate--L-alanine ligase"/>
    <property type="match status" value="1"/>
</dbReference>
<dbReference type="Gene3D" id="3.90.190.20">
    <property type="entry name" value="Mur ligase, C-terminal domain"/>
    <property type="match status" value="1"/>
</dbReference>
<dbReference type="Gene3D" id="3.40.1190.10">
    <property type="entry name" value="Mur-like, catalytic domain"/>
    <property type="match status" value="1"/>
</dbReference>
<dbReference type="Gene3D" id="3.40.50.720">
    <property type="entry name" value="NAD(P)-binding Rossmann-like Domain"/>
    <property type="match status" value="1"/>
</dbReference>
<dbReference type="HAMAP" id="MF_00046">
    <property type="entry name" value="MurC"/>
    <property type="match status" value="1"/>
</dbReference>
<dbReference type="InterPro" id="IPR036565">
    <property type="entry name" value="Mur-like_cat_sf"/>
</dbReference>
<dbReference type="InterPro" id="IPR004101">
    <property type="entry name" value="Mur_ligase_C"/>
</dbReference>
<dbReference type="InterPro" id="IPR036615">
    <property type="entry name" value="Mur_ligase_C_dom_sf"/>
</dbReference>
<dbReference type="InterPro" id="IPR013221">
    <property type="entry name" value="Mur_ligase_cen"/>
</dbReference>
<dbReference type="InterPro" id="IPR000713">
    <property type="entry name" value="Mur_ligase_N"/>
</dbReference>
<dbReference type="InterPro" id="IPR050061">
    <property type="entry name" value="MurCDEF_pg_biosynth"/>
</dbReference>
<dbReference type="InterPro" id="IPR005758">
    <property type="entry name" value="UDP-N-AcMur_Ala_ligase_MurC"/>
</dbReference>
<dbReference type="NCBIfam" id="TIGR01082">
    <property type="entry name" value="murC"/>
    <property type="match status" value="1"/>
</dbReference>
<dbReference type="PANTHER" id="PTHR43445:SF3">
    <property type="entry name" value="UDP-N-ACETYLMURAMATE--L-ALANINE LIGASE"/>
    <property type="match status" value="1"/>
</dbReference>
<dbReference type="PANTHER" id="PTHR43445">
    <property type="entry name" value="UDP-N-ACETYLMURAMATE--L-ALANINE LIGASE-RELATED"/>
    <property type="match status" value="1"/>
</dbReference>
<dbReference type="Pfam" id="PF01225">
    <property type="entry name" value="Mur_ligase"/>
    <property type="match status" value="1"/>
</dbReference>
<dbReference type="Pfam" id="PF02875">
    <property type="entry name" value="Mur_ligase_C"/>
    <property type="match status" value="1"/>
</dbReference>
<dbReference type="Pfam" id="PF08245">
    <property type="entry name" value="Mur_ligase_M"/>
    <property type="match status" value="1"/>
</dbReference>
<dbReference type="SUPFAM" id="SSF51984">
    <property type="entry name" value="MurCD N-terminal domain"/>
    <property type="match status" value="1"/>
</dbReference>
<dbReference type="SUPFAM" id="SSF53623">
    <property type="entry name" value="MurD-like peptide ligases, catalytic domain"/>
    <property type="match status" value="1"/>
</dbReference>
<dbReference type="SUPFAM" id="SSF53244">
    <property type="entry name" value="MurD-like peptide ligases, peptide-binding domain"/>
    <property type="match status" value="1"/>
</dbReference>
<evidence type="ECO:0000255" key="1">
    <source>
        <dbReference type="HAMAP-Rule" id="MF_00046"/>
    </source>
</evidence>
<sequence length="469" mass="50321">MMKNRVTNIHFVGIGGVGMSGIAEVLHNLGFKVSGSDQARNAATEHLGSLGIQVYPGHTAEHVNGADVVVTSTAVKKENPEVVAALEQQIPVIPRALMLAELMRFRDGIAIAGTHGKTTTTSLTASILGAAGLDPTFVIGGKLNAAGTNARLGKGEYIVAEADESDASFLHLTPIMSVVTNIDEDHMDTYGHSVEKLHQAFIDFIHRMPFYGKAFLCIDSEHVRAILPKVSKPYATYGLDDTADIYATDIENVGAQMKFTVHVQMKGHEQGSFEVVLNMPGRHNVLNALAAIGVALEVGASVEAIQKGLLGFEGVGRRFQKYGDIKLPNGGTALLVDDYGHHPVEMAATLAAARGAYPEKRLVLAFQPHRYTRTRDLFEDFTKVLNTVDALVLTEVYAAGEEPIAAADSRALARAIRVLGKLEPIYCENVADLPEMLLNVLQDGDIVLNMGAGSINRVPAALLELSKQI</sequence>
<accession>A1KVL2</accession>
<proteinExistence type="inferred from homology"/>
<name>MURC_NEIMF</name>
<keyword id="KW-0067">ATP-binding</keyword>
<keyword id="KW-0131">Cell cycle</keyword>
<keyword id="KW-0132">Cell division</keyword>
<keyword id="KW-0133">Cell shape</keyword>
<keyword id="KW-0961">Cell wall biogenesis/degradation</keyword>
<keyword id="KW-0963">Cytoplasm</keyword>
<keyword id="KW-0436">Ligase</keyword>
<keyword id="KW-0547">Nucleotide-binding</keyword>
<keyword id="KW-0573">Peptidoglycan synthesis</keyword>